<dbReference type="EMBL" id="AB180043">
    <property type="protein sequence ID" value="BAE46382.1"/>
    <property type="molecule type" value="mRNA"/>
</dbReference>
<dbReference type="CCDS" id="CCDS46640.1"/>
<dbReference type="RefSeq" id="NP_001122070.1">
    <property type="nucleotide sequence ID" value="NM_001128598.1"/>
</dbReference>
<dbReference type="FunCoup" id="Q3LHN0">
    <property type="interactions" value="3"/>
</dbReference>
<dbReference type="STRING" id="9606.ENSP00000398619"/>
<dbReference type="BioMuta" id="KRTAP25-1"/>
<dbReference type="DMDM" id="121942679"/>
<dbReference type="PaxDb" id="9606-ENSP00000398619"/>
<dbReference type="Antibodypedia" id="22465">
    <property type="antibodies" value="64 antibodies from 17 providers"/>
</dbReference>
<dbReference type="DNASU" id="100131902"/>
<dbReference type="Ensembl" id="ENST00000416044.1">
    <property type="protein sequence ID" value="ENSP00000398619.1"/>
    <property type="gene ID" value="ENSG00000232263.1"/>
</dbReference>
<dbReference type="GeneID" id="100131902"/>
<dbReference type="KEGG" id="hsa:100131902"/>
<dbReference type="MANE-Select" id="ENST00000416044.1">
    <property type="protein sequence ID" value="ENSP00000398619.1"/>
    <property type="RefSeq nucleotide sequence ID" value="NM_001128598.1"/>
    <property type="RefSeq protein sequence ID" value="NP_001122070.1"/>
</dbReference>
<dbReference type="UCSC" id="uc010glr.1">
    <property type="organism name" value="human"/>
</dbReference>
<dbReference type="AGR" id="HGNC:34003"/>
<dbReference type="CTD" id="100131902"/>
<dbReference type="GeneCards" id="KRTAP25-1"/>
<dbReference type="HGNC" id="HGNC:34003">
    <property type="gene designation" value="KRTAP25-1"/>
</dbReference>
<dbReference type="HPA" id="ENSG00000232263">
    <property type="expression patterns" value="Not detected"/>
</dbReference>
<dbReference type="neXtProt" id="NX_Q3LHN0"/>
<dbReference type="PharmGKB" id="PA162393758"/>
<dbReference type="VEuPathDB" id="HostDB:ENSG00000232263"/>
<dbReference type="eggNOG" id="ENOG502TCVB">
    <property type="taxonomic scope" value="Eukaryota"/>
</dbReference>
<dbReference type="GeneTree" id="ENSGT00550000076318"/>
<dbReference type="HOGENOM" id="CLU_2365096_0_0_1"/>
<dbReference type="InParanoid" id="Q3LHN0"/>
<dbReference type="OMA" id="ISFMHSS"/>
<dbReference type="OrthoDB" id="9809529at2759"/>
<dbReference type="PAN-GO" id="Q3LHN0">
    <property type="GO annotations" value="0 GO annotations based on evolutionary models"/>
</dbReference>
<dbReference type="PhylomeDB" id="Q3LHN0"/>
<dbReference type="PathwayCommons" id="Q3LHN0"/>
<dbReference type="Reactome" id="R-HSA-6805567">
    <property type="pathway name" value="Keratinization"/>
</dbReference>
<dbReference type="BioGRID-ORCS" id="100131902">
    <property type="hits" value="8 hits in 1099 CRISPR screens"/>
</dbReference>
<dbReference type="GenomeRNAi" id="100131902"/>
<dbReference type="Pharos" id="Q3LHN0">
    <property type="development level" value="Tdark"/>
</dbReference>
<dbReference type="PRO" id="PR:Q3LHN0"/>
<dbReference type="Proteomes" id="UP000005640">
    <property type="component" value="Chromosome 21"/>
</dbReference>
<dbReference type="RNAct" id="Q3LHN0">
    <property type="molecule type" value="protein"/>
</dbReference>
<dbReference type="Bgee" id="ENSG00000232263">
    <property type="expression patterns" value="Expressed in granulocyte and 2 other cell types or tissues"/>
</dbReference>
<dbReference type="GO" id="GO:0005829">
    <property type="term" value="C:cytosol"/>
    <property type="evidence" value="ECO:0000304"/>
    <property type="project" value="Reactome"/>
</dbReference>
<dbReference type="GO" id="GO:0045095">
    <property type="term" value="C:keratin filament"/>
    <property type="evidence" value="ECO:0007669"/>
    <property type="project" value="InterPro"/>
</dbReference>
<dbReference type="GO" id="GO:0005198">
    <property type="term" value="F:structural molecule activity"/>
    <property type="evidence" value="ECO:0007669"/>
    <property type="project" value="InterPro"/>
</dbReference>
<dbReference type="InterPro" id="IPR007659">
    <property type="entry name" value="Keratin_matx"/>
</dbReference>
<dbReference type="InterPro" id="IPR007951">
    <property type="entry name" value="KRTAP_PMG"/>
</dbReference>
<dbReference type="PANTHER" id="PTHR23260">
    <property type="entry name" value="KERATIN ASSOCIATED PROTEIN 3-3-RELATED"/>
    <property type="match status" value="1"/>
</dbReference>
<dbReference type="PANTHER" id="PTHR23260:SF7">
    <property type="entry name" value="KERATIN-ASSOCIATED PROTEIN 26-1"/>
    <property type="match status" value="1"/>
</dbReference>
<dbReference type="Pfam" id="PF05287">
    <property type="entry name" value="PMG"/>
    <property type="match status" value="1"/>
</dbReference>
<sequence length="102" mass="11738">MHNRSQGFFFSSCHPQNHVSYGCQSPSFIFCRCQSLNFVSRTCYPLSYFSYGNQTIGSISNSFRSLNYVSHSFQPISFMHSSFQPACSDFVGWQSPFLRRTC</sequence>
<keyword id="KW-0416">Keratin</keyword>
<keyword id="KW-1185">Reference proteome</keyword>
<keyword id="KW-0677">Repeat</keyword>
<protein>
    <recommendedName>
        <fullName>Keratin-associated protein 25-1</fullName>
    </recommendedName>
</protein>
<reference key="1">
    <citation type="submission" date="2002-11" db="EMBL/GenBank/DDBJ databases">
        <title>Identification of complete keratin-associated protein (KAP) gene cluster spanning 800 kb region on human chromosome 21q22.11.</title>
        <authorList>
            <person name="Obayashi I."/>
            <person name="Shibuya K."/>
            <person name="Minoshima S."/>
            <person name="Kudoh J."/>
            <person name="Shimizu N."/>
        </authorList>
    </citation>
    <scope>NUCLEOTIDE SEQUENCE [MRNA]</scope>
    <source>
        <tissue>Hair root</tissue>
    </source>
</reference>
<accession>Q3LHN0</accession>
<organism>
    <name type="scientific">Homo sapiens</name>
    <name type="common">Human</name>
    <dbReference type="NCBI Taxonomy" id="9606"/>
    <lineage>
        <taxon>Eukaryota</taxon>
        <taxon>Metazoa</taxon>
        <taxon>Chordata</taxon>
        <taxon>Craniata</taxon>
        <taxon>Vertebrata</taxon>
        <taxon>Euteleostomi</taxon>
        <taxon>Mammalia</taxon>
        <taxon>Eutheria</taxon>
        <taxon>Euarchontoglires</taxon>
        <taxon>Primates</taxon>
        <taxon>Haplorrhini</taxon>
        <taxon>Catarrhini</taxon>
        <taxon>Hominidae</taxon>
        <taxon>Homo</taxon>
    </lineage>
</organism>
<name>KR251_HUMAN</name>
<feature type="chain" id="PRO_0000308251" description="Keratin-associated protein 25-1">
    <location>
        <begin position="1"/>
        <end position="102"/>
    </location>
</feature>
<feature type="sequence variant" id="VAR_060063" description="In dbSNP:rs8127420.">
    <original>S</original>
    <variation>P</variation>
    <location>
        <position position="40"/>
    </location>
</feature>
<evidence type="ECO:0000250" key="1"/>
<evidence type="ECO:0000305" key="2"/>
<proteinExistence type="inferred from homology"/>
<comment type="function">
    <text evidence="1">In the hair cortex, hair keratin intermediate filaments are embedded in an interfilamentous matrix, consisting of hair keratin-associated proteins (KRTAP), which are essential for the formation of a rigid and resistant hair shaft through their extensive disulfide bond cross-linking with abundant cysteine residues of hair keratins. The matrix proteins include the high-sulfur and high-glycine-tyrosine keratins (By similarity).</text>
</comment>
<comment type="subunit">
    <text evidence="1">Interacts with hair keratins.</text>
</comment>
<comment type="similarity">
    <text evidence="2">Belongs to the PMG family.</text>
</comment>
<gene>
    <name type="primary">KRTAP25-1</name>
    <name type="synonym">KAP25.1</name>
</gene>